<keyword id="KW-0521">NADP</keyword>
<keyword id="KW-0560">Oxidoreductase</keyword>
<keyword id="KW-0627">Porphyrin biosynthesis</keyword>
<keyword id="KW-1185">Reference proteome</keyword>
<accession>Q5YP69</accession>
<name>HEM1_NOCFA</name>
<protein>
    <recommendedName>
        <fullName evidence="1">Glutamyl-tRNA reductase</fullName>
        <shortName evidence="1">GluTR</shortName>
        <ecNumber evidence="1">1.2.1.70</ecNumber>
    </recommendedName>
</protein>
<sequence length="477" mass="50016">MSVLLVGVSHRSAPVSVLEKVAITDADRPKLIDKMLASSHISEAMIVSTCNRVEVYAVVDAFHGGLAEVGELLTRHSGLAMPDLTKHAYVRYSEAAAEHLFAVASGLDSMVVGEQQVLSQIRGAYATADAQQAVGRTLHELAQHALRVGKRVHSETGIDRAGASVVSVALDRAAQVLGDLAGRTAVVVGAGAMGGLSVAHLARAGIGRIIVVNRTIERARRLAETAASYGVESSALELDRLHEAMSAADVVLSCTGAVGAVVTLADTHRALADRDRAEFPAGDRPLVFCDLGLPRDVEPAVAGLPGVAVIDIESLQRDPAAGAAADDTAAARSIVAEELAKYLAGQRMAEVTPTVAALRQRAAEVVEAELLRLDSRLPGLAEPERDEVARTVRRVVDKLLHAPTVRVKQLASTPGGDSYAEALRELFELKPGAAQAVAAPMEITAIGPDRTAGLADDFTPGHRLDFEQHLGEEGKPA</sequence>
<comment type="function">
    <text evidence="1">Catalyzes the NADPH-dependent reduction of glutamyl-tRNA(Glu) to glutamate 1-semialdehyde (GSA).</text>
</comment>
<comment type="catalytic activity">
    <reaction evidence="1">
        <text>(S)-4-amino-5-oxopentanoate + tRNA(Glu) + NADP(+) = L-glutamyl-tRNA(Glu) + NADPH + H(+)</text>
        <dbReference type="Rhea" id="RHEA:12344"/>
        <dbReference type="Rhea" id="RHEA-COMP:9663"/>
        <dbReference type="Rhea" id="RHEA-COMP:9680"/>
        <dbReference type="ChEBI" id="CHEBI:15378"/>
        <dbReference type="ChEBI" id="CHEBI:57501"/>
        <dbReference type="ChEBI" id="CHEBI:57783"/>
        <dbReference type="ChEBI" id="CHEBI:58349"/>
        <dbReference type="ChEBI" id="CHEBI:78442"/>
        <dbReference type="ChEBI" id="CHEBI:78520"/>
        <dbReference type="EC" id="1.2.1.70"/>
    </reaction>
</comment>
<comment type="pathway">
    <text evidence="1">Porphyrin-containing compound metabolism; protoporphyrin-IX biosynthesis; 5-aminolevulinate from L-glutamyl-tRNA(Glu): step 1/2.</text>
</comment>
<comment type="subunit">
    <text evidence="1">Homodimer.</text>
</comment>
<comment type="domain">
    <text evidence="1">Possesses an unusual extended V-shaped dimeric structure with each monomer consisting of three distinct domains arranged along a curved 'spinal' alpha-helix. The N-terminal catalytic domain specifically recognizes the glutamate moiety of the substrate. The second domain is the NADPH-binding domain, and the third C-terminal domain is responsible for dimerization.</text>
</comment>
<comment type="miscellaneous">
    <text evidence="1">During catalysis, the active site Cys acts as a nucleophile attacking the alpha-carbonyl group of tRNA-bound glutamate with the formation of a thioester intermediate between enzyme and glutamate, and the concomitant release of tRNA(Glu). The thioester intermediate is finally reduced by direct hydride transfer from NADPH, to form the product GSA.</text>
</comment>
<comment type="similarity">
    <text evidence="1">Belongs to the glutamyl-tRNA reductase family.</text>
</comment>
<reference key="1">
    <citation type="journal article" date="2004" name="Proc. Natl. Acad. Sci. U.S.A.">
        <title>The complete genomic sequence of Nocardia farcinica IFM 10152.</title>
        <authorList>
            <person name="Ishikawa J."/>
            <person name="Yamashita A."/>
            <person name="Mikami Y."/>
            <person name="Hoshino Y."/>
            <person name="Kurita H."/>
            <person name="Hotta K."/>
            <person name="Shiba T."/>
            <person name="Hattori M."/>
        </authorList>
    </citation>
    <scope>NUCLEOTIDE SEQUENCE [LARGE SCALE GENOMIC DNA]</scope>
    <source>
        <strain>IFM 10152</strain>
    </source>
</reference>
<proteinExistence type="inferred from homology"/>
<evidence type="ECO:0000255" key="1">
    <source>
        <dbReference type="HAMAP-Rule" id="MF_00087"/>
    </source>
</evidence>
<dbReference type="EC" id="1.2.1.70" evidence="1"/>
<dbReference type="EMBL" id="AP006618">
    <property type="protein sequence ID" value="BAD60022.1"/>
    <property type="molecule type" value="Genomic_DNA"/>
</dbReference>
<dbReference type="RefSeq" id="WP_011211704.1">
    <property type="nucleotide sequence ID" value="NC_006361.1"/>
</dbReference>
<dbReference type="SMR" id="Q5YP69"/>
<dbReference type="STRING" id="247156.NFA_51700"/>
<dbReference type="GeneID" id="61135748"/>
<dbReference type="KEGG" id="nfa:NFA_51700"/>
<dbReference type="eggNOG" id="COG0373">
    <property type="taxonomic scope" value="Bacteria"/>
</dbReference>
<dbReference type="HOGENOM" id="CLU_035113_4_0_11"/>
<dbReference type="OrthoDB" id="110209at2"/>
<dbReference type="UniPathway" id="UPA00251">
    <property type="reaction ID" value="UER00316"/>
</dbReference>
<dbReference type="Proteomes" id="UP000006820">
    <property type="component" value="Chromosome"/>
</dbReference>
<dbReference type="GO" id="GO:0008883">
    <property type="term" value="F:glutamyl-tRNA reductase activity"/>
    <property type="evidence" value="ECO:0007669"/>
    <property type="project" value="UniProtKB-UniRule"/>
</dbReference>
<dbReference type="GO" id="GO:0050661">
    <property type="term" value="F:NADP binding"/>
    <property type="evidence" value="ECO:0007669"/>
    <property type="project" value="InterPro"/>
</dbReference>
<dbReference type="GO" id="GO:0019353">
    <property type="term" value="P:protoporphyrinogen IX biosynthetic process from glutamate"/>
    <property type="evidence" value="ECO:0007669"/>
    <property type="project" value="TreeGrafter"/>
</dbReference>
<dbReference type="CDD" id="cd05213">
    <property type="entry name" value="NAD_bind_Glutamyl_tRNA_reduct"/>
    <property type="match status" value="1"/>
</dbReference>
<dbReference type="FunFam" id="3.30.460.30:FF:000001">
    <property type="entry name" value="Glutamyl-tRNA reductase"/>
    <property type="match status" value="1"/>
</dbReference>
<dbReference type="Gene3D" id="3.30.460.30">
    <property type="entry name" value="Glutamyl-tRNA reductase, N-terminal domain"/>
    <property type="match status" value="1"/>
</dbReference>
<dbReference type="Gene3D" id="3.40.50.720">
    <property type="entry name" value="NAD(P)-binding Rossmann-like Domain"/>
    <property type="match status" value="1"/>
</dbReference>
<dbReference type="HAMAP" id="MF_00087">
    <property type="entry name" value="Glu_tRNA_reductase"/>
    <property type="match status" value="1"/>
</dbReference>
<dbReference type="InterPro" id="IPR000343">
    <property type="entry name" value="4pyrrol_synth_GluRdtase"/>
</dbReference>
<dbReference type="InterPro" id="IPR015896">
    <property type="entry name" value="4pyrrol_synth_GluRdtase_dimer"/>
</dbReference>
<dbReference type="InterPro" id="IPR015895">
    <property type="entry name" value="4pyrrol_synth_GluRdtase_N"/>
</dbReference>
<dbReference type="InterPro" id="IPR018214">
    <property type="entry name" value="GluRdtase_CS"/>
</dbReference>
<dbReference type="InterPro" id="IPR036453">
    <property type="entry name" value="GluRdtase_dimer_dom_sf"/>
</dbReference>
<dbReference type="InterPro" id="IPR036343">
    <property type="entry name" value="GluRdtase_N_sf"/>
</dbReference>
<dbReference type="InterPro" id="IPR036291">
    <property type="entry name" value="NAD(P)-bd_dom_sf"/>
</dbReference>
<dbReference type="InterPro" id="IPR006151">
    <property type="entry name" value="Shikm_DH/Glu-tRNA_Rdtase"/>
</dbReference>
<dbReference type="NCBIfam" id="TIGR01035">
    <property type="entry name" value="hemA"/>
    <property type="match status" value="1"/>
</dbReference>
<dbReference type="NCBIfam" id="NF000744">
    <property type="entry name" value="PRK00045.1-3"/>
    <property type="match status" value="1"/>
</dbReference>
<dbReference type="PANTHER" id="PTHR43013">
    <property type="entry name" value="GLUTAMYL-TRNA REDUCTASE"/>
    <property type="match status" value="1"/>
</dbReference>
<dbReference type="PANTHER" id="PTHR43013:SF1">
    <property type="entry name" value="GLUTAMYL-TRNA REDUCTASE"/>
    <property type="match status" value="1"/>
</dbReference>
<dbReference type="Pfam" id="PF00745">
    <property type="entry name" value="GlutR_dimer"/>
    <property type="match status" value="1"/>
</dbReference>
<dbReference type="Pfam" id="PF05201">
    <property type="entry name" value="GlutR_N"/>
    <property type="match status" value="1"/>
</dbReference>
<dbReference type="Pfam" id="PF01488">
    <property type="entry name" value="Shikimate_DH"/>
    <property type="match status" value="1"/>
</dbReference>
<dbReference type="PIRSF" id="PIRSF000445">
    <property type="entry name" value="4pyrrol_synth_GluRdtase"/>
    <property type="match status" value="1"/>
</dbReference>
<dbReference type="SUPFAM" id="SSF69742">
    <property type="entry name" value="Glutamyl tRNA-reductase catalytic, N-terminal domain"/>
    <property type="match status" value="1"/>
</dbReference>
<dbReference type="SUPFAM" id="SSF69075">
    <property type="entry name" value="Glutamyl tRNA-reductase dimerization domain"/>
    <property type="match status" value="1"/>
</dbReference>
<dbReference type="SUPFAM" id="SSF51735">
    <property type="entry name" value="NAD(P)-binding Rossmann-fold domains"/>
    <property type="match status" value="1"/>
</dbReference>
<dbReference type="PROSITE" id="PS00747">
    <property type="entry name" value="GLUTR"/>
    <property type="match status" value="1"/>
</dbReference>
<gene>
    <name evidence="1" type="primary">hemA</name>
    <name type="ordered locus">NFA_51700</name>
</gene>
<feature type="chain" id="PRO_0000335054" description="Glutamyl-tRNA reductase">
    <location>
        <begin position="1"/>
        <end position="477"/>
    </location>
</feature>
<feature type="active site" description="Nucleophile" evidence="1">
    <location>
        <position position="50"/>
    </location>
</feature>
<feature type="binding site" evidence="1">
    <location>
        <begin position="49"/>
        <end position="52"/>
    </location>
    <ligand>
        <name>substrate</name>
    </ligand>
</feature>
<feature type="binding site" evidence="1">
    <location>
        <position position="109"/>
    </location>
    <ligand>
        <name>substrate</name>
    </ligand>
</feature>
<feature type="binding site" evidence="1">
    <location>
        <begin position="114"/>
        <end position="116"/>
    </location>
    <ligand>
        <name>substrate</name>
    </ligand>
</feature>
<feature type="binding site" evidence="1">
    <location>
        <position position="120"/>
    </location>
    <ligand>
        <name>substrate</name>
    </ligand>
</feature>
<feature type="binding site" evidence="1">
    <location>
        <begin position="189"/>
        <end position="194"/>
    </location>
    <ligand>
        <name>NADP(+)</name>
        <dbReference type="ChEBI" id="CHEBI:58349"/>
    </ligand>
</feature>
<feature type="site" description="Important for activity" evidence="1">
    <location>
        <position position="99"/>
    </location>
</feature>
<organism>
    <name type="scientific">Nocardia farcinica (strain IFM 10152)</name>
    <dbReference type="NCBI Taxonomy" id="247156"/>
    <lineage>
        <taxon>Bacteria</taxon>
        <taxon>Bacillati</taxon>
        <taxon>Actinomycetota</taxon>
        <taxon>Actinomycetes</taxon>
        <taxon>Mycobacteriales</taxon>
        <taxon>Nocardiaceae</taxon>
        <taxon>Nocardia</taxon>
    </lineage>
</organism>